<gene>
    <name type="primary">dbp10</name>
    <name type="ORF">AN0583</name>
</gene>
<organism>
    <name type="scientific">Emericella nidulans (strain FGSC A4 / ATCC 38163 / CBS 112.46 / NRRL 194 / M139)</name>
    <name type="common">Aspergillus nidulans</name>
    <dbReference type="NCBI Taxonomy" id="227321"/>
    <lineage>
        <taxon>Eukaryota</taxon>
        <taxon>Fungi</taxon>
        <taxon>Dikarya</taxon>
        <taxon>Ascomycota</taxon>
        <taxon>Pezizomycotina</taxon>
        <taxon>Eurotiomycetes</taxon>
        <taxon>Eurotiomycetidae</taxon>
        <taxon>Eurotiales</taxon>
        <taxon>Aspergillaceae</taxon>
        <taxon>Aspergillus</taxon>
        <taxon>Aspergillus subgen. Nidulantes</taxon>
    </lineage>
</organism>
<feature type="chain" id="PRO_0000232315" description="ATP-dependent RNA helicase dbp10">
    <location>
        <begin position="1"/>
        <end position="936"/>
    </location>
</feature>
<feature type="domain" description="Helicase ATP-binding" evidence="2">
    <location>
        <begin position="122"/>
        <end position="294"/>
    </location>
</feature>
<feature type="domain" description="Helicase C-terminal" evidence="3">
    <location>
        <begin position="360"/>
        <end position="511"/>
    </location>
</feature>
<feature type="region of interest" description="Disordered" evidence="4">
    <location>
        <begin position="1"/>
        <end position="48"/>
    </location>
</feature>
<feature type="region of interest" description="Disordered" evidence="4">
    <location>
        <begin position="337"/>
        <end position="363"/>
    </location>
</feature>
<feature type="region of interest" description="Disordered" evidence="4">
    <location>
        <begin position="642"/>
        <end position="684"/>
    </location>
</feature>
<feature type="region of interest" description="Disordered" evidence="4">
    <location>
        <begin position="701"/>
        <end position="721"/>
    </location>
</feature>
<feature type="region of interest" description="Disordered" evidence="4">
    <location>
        <begin position="843"/>
        <end position="936"/>
    </location>
</feature>
<feature type="short sequence motif" description="Q motif">
    <location>
        <begin position="91"/>
        <end position="119"/>
    </location>
</feature>
<feature type="short sequence motif" description="DEAD box">
    <location>
        <begin position="242"/>
        <end position="245"/>
    </location>
</feature>
<feature type="compositionally biased region" description="Basic and acidic residues" evidence="4">
    <location>
        <begin position="341"/>
        <end position="352"/>
    </location>
</feature>
<feature type="compositionally biased region" description="Acidic residues" evidence="4">
    <location>
        <begin position="663"/>
        <end position="675"/>
    </location>
</feature>
<feature type="compositionally biased region" description="Low complexity" evidence="4">
    <location>
        <begin position="701"/>
        <end position="717"/>
    </location>
</feature>
<feature type="compositionally biased region" description="Basic and acidic residues" evidence="4">
    <location>
        <begin position="867"/>
        <end position="895"/>
    </location>
</feature>
<feature type="compositionally biased region" description="Low complexity" evidence="4">
    <location>
        <begin position="896"/>
        <end position="906"/>
    </location>
</feature>
<feature type="compositionally biased region" description="Basic and acidic residues" evidence="4">
    <location>
        <begin position="907"/>
        <end position="916"/>
    </location>
</feature>
<feature type="compositionally biased region" description="Basic residues" evidence="4">
    <location>
        <begin position="917"/>
        <end position="936"/>
    </location>
</feature>
<feature type="binding site" evidence="2">
    <location>
        <begin position="135"/>
        <end position="142"/>
    </location>
    <ligand>
        <name>ATP</name>
        <dbReference type="ChEBI" id="CHEBI:30616"/>
    </ligand>
</feature>
<comment type="function">
    <text evidence="1">ATP-binding RNA helicase involved in the biogenesis of 60S ribosomal subunits and is required for the normal formation of 25S and 5.8S rRNAs.</text>
</comment>
<comment type="catalytic activity">
    <reaction>
        <text>ATP + H2O = ADP + phosphate + H(+)</text>
        <dbReference type="Rhea" id="RHEA:13065"/>
        <dbReference type="ChEBI" id="CHEBI:15377"/>
        <dbReference type="ChEBI" id="CHEBI:15378"/>
        <dbReference type="ChEBI" id="CHEBI:30616"/>
        <dbReference type="ChEBI" id="CHEBI:43474"/>
        <dbReference type="ChEBI" id="CHEBI:456216"/>
        <dbReference type="EC" id="3.6.4.13"/>
    </reaction>
</comment>
<comment type="subcellular location">
    <subcellularLocation>
        <location evidence="1">Nucleus</location>
        <location evidence="1">Nucleolus</location>
    </subcellularLocation>
</comment>
<comment type="domain">
    <text>The Q motif is unique to and characteristic of the DEAD box family of RNA helicases and controls ATP binding and hydrolysis.</text>
</comment>
<comment type="similarity">
    <text evidence="5">Belongs to the DEAD box helicase family. DDX54/DBP10 subfamily.</text>
</comment>
<sequence length="936" mass="102450">MPSRAASPALSENEFDITGALFQNDSDSDAETQKPTKRKKVPAAPNVNLDFLGEANAGDSDEDDEAFIAEKQTSANRKSANLKGRTVKKGGGFQAMGLNANLLKAIARKGFSVPTPIQRKTIPVIMEDQDVVGMARTGSGKTAAFVIPMIEKLKSHSTKFGARGLILSPSRELALQTLKVVKELGKGTDLKSVLLVGGDSLEEQFGMMAGNPDIVIATPGRFLHLKVEMNLDLSSIKYVVFDEADRLFEMGFAAQLTEILHGLPSTRQTLLFSATLPKSLVEFARAGLQDPTLVRLDTESKISPDLQNAFFSVKSAEKEGALLYILNEVIKMPTGPTEASLRLKEKGPEDSKNKKRKRAEMERAVNMKESPTKHSTIVFAATKHHVDYLYSLLREAGFAVSYVYGSLDQTARKIQVQNFRTGISNILVVTDVAARGIDIPILANVINYDFPSQPKIFVHRVGRTARAGRKGWSYSLVRDADAPYLLDLQLFLGRKLVLGRESDQVNFAEDVAVGSLPRDGLSQTCEWVSRVLDDDADIFAQRAVSTKGEKLYLRTRNAASAESAKRAKQVVTSDNWTAVHPLFQDEASNLEAEREKMLARIGGYRPQETIFEVQNRRGGKGGKASEPDEALDSIKRVRSTLEAKKKQRAQAEELEATTNTDGAEVDGDAFSDLEGDNANIPDNMSLASESDLEVTFSSYNTTDKASKSNSNSKSDSTPTTLFQNPEYFMSYTPANTSLAEDRAYGVHSGTNANFASATRNATMDLQADEGGKGFGEPRTLMRWDKRHKKYVSRQNDEDGSKGTKLVRGESGAKIAATFRSGRFDAWKKGKRVGRLPRVGEAETPGLAADLGGSGGSFGGKRFRHKSEKAPKAADPLRGDYEKMKKKAEAARERAASKVGGVTSGGKSEIRNTDDIRKARKLKQKRREKNARPSRKK</sequence>
<accession>Q5BFU7</accession>
<accession>C8VSC6</accession>
<keyword id="KW-0067">ATP-binding</keyword>
<keyword id="KW-0347">Helicase</keyword>
<keyword id="KW-0378">Hydrolase</keyword>
<keyword id="KW-0547">Nucleotide-binding</keyword>
<keyword id="KW-0539">Nucleus</keyword>
<keyword id="KW-1185">Reference proteome</keyword>
<keyword id="KW-0690">Ribosome biogenesis</keyword>
<keyword id="KW-0694">RNA-binding</keyword>
<keyword id="KW-0698">rRNA processing</keyword>
<evidence type="ECO:0000250" key="1"/>
<evidence type="ECO:0000255" key="2">
    <source>
        <dbReference type="PROSITE-ProRule" id="PRU00541"/>
    </source>
</evidence>
<evidence type="ECO:0000255" key="3">
    <source>
        <dbReference type="PROSITE-ProRule" id="PRU00542"/>
    </source>
</evidence>
<evidence type="ECO:0000256" key="4">
    <source>
        <dbReference type="SAM" id="MobiDB-lite"/>
    </source>
</evidence>
<evidence type="ECO:0000305" key="5"/>
<protein>
    <recommendedName>
        <fullName>ATP-dependent RNA helicase dbp10</fullName>
        <ecNumber>3.6.4.13</ecNumber>
    </recommendedName>
</protein>
<reference key="1">
    <citation type="journal article" date="2005" name="Nature">
        <title>Sequencing of Aspergillus nidulans and comparative analysis with A. fumigatus and A. oryzae.</title>
        <authorList>
            <person name="Galagan J.E."/>
            <person name="Calvo S.E."/>
            <person name="Cuomo C."/>
            <person name="Ma L.-J."/>
            <person name="Wortman J.R."/>
            <person name="Batzoglou S."/>
            <person name="Lee S.-I."/>
            <person name="Bastuerkmen M."/>
            <person name="Spevak C.C."/>
            <person name="Clutterbuck J."/>
            <person name="Kapitonov V."/>
            <person name="Jurka J."/>
            <person name="Scazzocchio C."/>
            <person name="Farman M.L."/>
            <person name="Butler J."/>
            <person name="Purcell S."/>
            <person name="Harris S."/>
            <person name="Braus G.H."/>
            <person name="Draht O."/>
            <person name="Busch S."/>
            <person name="D'Enfert C."/>
            <person name="Bouchier C."/>
            <person name="Goldman G.H."/>
            <person name="Bell-Pedersen D."/>
            <person name="Griffiths-Jones S."/>
            <person name="Doonan J.H."/>
            <person name="Yu J."/>
            <person name="Vienken K."/>
            <person name="Pain A."/>
            <person name="Freitag M."/>
            <person name="Selker E.U."/>
            <person name="Archer D.B."/>
            <person name="Penalva M.A."/>
            <person name="Oakley B.R."/>
            <person name="Momany M."/>
            <person name="Tanaka T."/>
            <person name="Kumagai T."/>
            <person name="Asai K."/>
            <person name="Machida M."/>
            <person name="Nierman W.C."/>
            <person name="Denning D.W."/>
            <person name="Caddick M.X."/>
            <person name="Hynes M."/>
            <person name="Paoletti M."/>
            <person name="Fischer R."/>
            <person name="Miller B.L."/>
            <person name="Dyer P.S."/>
            <person name="Sachs M.S."/>
            <person name="Osmani S.A."/>
            <person name="Birren B.W."/>
        </authorList>
    </citation>
    <scope>NUCLEOTIDE SEQUENCE [LARGE SCALE GENOMIC DNA]</scope>
    <source>
        <strain>FGSC A4 / ATCC 38163 / CBS 112.46 / NRRL 194 / M139</strain>
    </source>
</reference>
<reference key="2">
    <citation type="journal article" date="2009" name="Fungal Genet. Biol.">
        <title>The 2008 update of the Aspergillus nidulans genome annotation: a community effort.</title>
        <authorList>
            <person name="Wortman J.R."/>
            <person name="Gilsenan J.M."/>
            <person name="Joardar V."/>
            <person name="Deegan J."/>
            <person name="Clutterbuck J."/>
            <person name="Andersen M.R."/>
            <person name="Archer D."/>
            <person name="Bencina M."/>
            <person name="Braus G."/>
            <person name="Coutinho P."/>
            <person name="von Dohren H."/>
            <person name="Doonan J."/>
            <person name="Driessen A.J."/>
            <person name="Durek P."/>
            <person name="Espeso E."/>
            <person name="Fekete E."/>
            <person name="Flipphi M."/>
            <person name="Estrada C.G."/>
            <person name="Geysens S."/>
            <person name="Goldman G."/>
            <person name="de Groot P.W."/>
            <person name="Hansen K."/>
            <person name="Harris S.D."/>
            <person name="Heinekamp T."/>
            <person name="Helmstaedt K."/>
            <person name="Henrissat B."/>
            <person name="Hofmann G."/>
            <person name="Homan T."/>
            <person name="Horio T."/>
            <person name="Horiuchi H."/>
            <person name="James S."/>
            <person name="Jones M."/>
            <person name="Karaffa L."/>
            <person name="Karanyi Z."/>
            <person name="Kato M."/>
            <person name="Keller N."/>
            <person name="Kelly D.E."/>
            <person name="Kiel J.A."/>
            <person name="Kim J.M."/>
            <person name="van der Klei I.J."/>
            <person name="Klis F.M."/>
            <person name="Kovalchuk A."/>
            <person name="Krasevec N."/>
            <person name="Kubicek C.P."/>
            <person name="Liu B."/>
            <person name="Maccabe A."/>
            <person name="Meyer V."/>
            <person name="Mirabito P."/>
            <person name="Miskei M."/>
            <person name="Mos M."/>
            <person name="Mullins J."/>
            <person name="Nelson D.R."/>
            <person name="Nielsen J."/>
            <person name="Oakley B.R."/>
            <person name="Osmani S.A."/>
            <person name="Pakula T."/>
            <person name="Paszewski A."/>
            <person name="Paulsen I."/>
            <person name="Pilsyk S."/>
            <person name="Pocsi I."/>
            <person name="Punt P.J."/>
            <person name="Ram A.F."/>
            <person name="Ren Q."/>
            <person name="Robellet X."/>
            <person name="Robson G."/>
            <person name="Seiboth B."/>
            <person name="van Solingen P."/>
            <person name="Specht T."/>
            <person name="Sun J."/>
            <person name="Taheri-Talesh N."/>
            <person name="Takeshita N."/>
            <person name="Ussery D."/>
            <person name="vanKuyk P.A."/>
            <person name="Visser H."/>
            <person name="van de Vondervoort P.J."/>
            <person name="de Vries R.P."/>
            <person name="Walton J."/>
            <person name="Xiang X."/>
            <person name="Xiong Y."/>
            <person name="Zeng A.P."/>
            <person name="Brandt B.W."/>
            <person name="Cornell M.J."/>
            <person name="van den Hondel C.A."/>
            <person name="Visser J."/>
            <person name="Oliver S.G."/>
            <person name="Turner G."/>
        </authorList>
    </citation>
    <scope>GENOME REANNOTATION</scope>
    <source>
        <strain>FGSC A4 / ATCC 38163 / CBS 112.46 / NRRL 194 / M139</strain>
    </source>
</reference>
<proteinExistence type="inferred from homology"/>
<name>DBP10_EMENI</name>
<dbReference type="EC" id="3.6.4.13"/>
<dbReference type="EMBL" id="AACD01000007">
    <property type="protein sequence ID" value="EAA66682.1"/>
    <property type="molecule type" value="Genomic_DNA"/>
</dbReference>
<dbReference type="EMBL" id="BN001308">
    <property type="protein sequence ID" value="CBF89188.1"/>
    <property type="molecule type" value="Genomic_DNA"/>
</dbReference>
<dbReference type="RefSeq" id="XP_658187.1">
    <property type="nucleotide sequence ID" value="XM_653095.1"/>
</dbReference>
<dbReference type="SMR" id="Q5BFU7"/>
<dbReference type="FunCoup" id="Q5BFU7">
    <property type="interactions" value="1027"/>
</dbReference>
<dbReference type="STRING" id="227321.Q5BFU7"/>
<dbReference type="EnsemblFungi" id="CBF89188">
    <property type="protein sequence ID" value="CBF89188"/>
    <property type="gene ID" value="ANIA_00583"/>
</dbReference>
<dbReference type="KEGG" id="ani:ANIA_00583"/>
<dbReference type="VEuPathDB" id="FungiDB:AN0583"/>
<dbReference type="eggNOG" id="KOG0337">
    <property type="taxonomic scope" value="Eukaryota"/>
</dbReference>
<dbReference type="HOGENOM" id="CLU_003041_5_1_1"/>
<dbReference type="InParanoid" id="Q5BFU7"/>
<dbReference type="OMA" id="EDQFGMM"/>
<dbReference type="OrthoDB" id="10261375at2759"/>
<dbReference type="Proteomes" id="UP000000560">
    <property type="component" value="Chromosome VIII"/>
</dbReference>
<dbReference type="GO" id="GO:0005730">
    <property type="term" value="C:nucleolus"/>
    <property type="evidence" value="ECO:0000318"/>
    <property type="project" value="GO_Central"/>
</dbReference>
<dbReference type="GO" id="GO:0005524">
    <property type="term" value="F:ATP binding"/>
    <property type="evidence" value="ECO:0007669"/>
    <property type="project" value="UniProtKB-KW"/>
</dbReference>
<dbReference type="GO" id="GO:0016887">
    <property type="term" value="F:ATP hydrolysis activity"/>
    <property type="evidence" value="ECO:0007669"/>
    <property type="project" value="RHEA"/>
</dbReference>
<dbReference type="GO" id="GO:0003723">
    <property type="term" value="F:RNA binding"/>
    <property type="evidence" value="ECO:0007669"/>
    <property type="project" value="UniProtKB-KW"/>
</dbReference>
<dbReference type="GO" id="GO:0003724">
    <property type="term" value="F:RNA helicase activity"/>
    <property type="evidence" value="ECO:0007669"/>
    <property type="project" value="UniProtKB-EC"/>
</dbReference>
<dbReference type="GO" id="GO:0006364">
    <property type="term" value="P:rRNA processing"/>
    <property type="evidence" value="ECO:0000318"/>
    <property type="project" value="GO_Central"/>
</dbReference>
<dbReference type="CDD" id="cd17959">
    <property type="entry name" value="DEADc_DDX54"/>
    <property type="match status" value="1"/>
</dbReference>
<dbReference type="CDD" id="cd18787">
    <property type="entry name" value="SF2_C_DEAD"/>
    <property type="match status" value="1"/>
</dbReference>
<dbReference type="FunFam" id="3.40.50.300:FF:000865">
    <property type="entry name" value="ATP-dependent RNA helicase DDX54"/>
    <property type="match status" value="1"/>
</dbReference>
<dbReference type="Gene3D" id="3.40.50.300">
    <property type="entry name" value="P-loop containing nucleotide triphosphate hydrolases"/>
    <property type="match status" value="2"/>
</dbReference>
<dbReference type="InterPro" id="IPR012541">
    <property type="entry name" value="DBP10_C"/>
</dbReference>
<dbReference type="InterPro" id="IPR033517">
    <property type="entry name" value="DDX54/DBP10_DEAD-box_helicase"/>
</dbReference>
<dbReference type="InterPro" id="IPR011545">
    <property type="entry name" value="DEAD/DEAH_box_helicase_dom"/>
</dbReference>
<dbReference type="InterPro" id="IPR050079">
    <property type="entry name" value="DEAD_box_RNA_helicase"/>
</dbReference>
<dbReference type="InterPro" id="IPR014001">
    <property type="entry name" value="Helicase_ATP-bd"/>
</dbReference>
<dbReference type="InterPro" id="IPR001650">
    <property type="entry name" value="Helicase_C-like"/>
</dbReference>
<dbReference type="InterPro" id="IPR027417">
    <property type="entry name" value="P-loop_NTPase"/>
</dbReference>
<dbReference type="InterPro" id="IPR000629">
    <property type="entry name" value="RNA-helicase_DEAD-box_CS"/>
</dbReference>
<dbReference type="InterPro" id="IPR014014">
    <property type="entry name" value="RNA_helicase_DEAD_Q_motif"/>
</dbReference>
<dbReference type="PANTHER" id="PTHR47959">
    <property type="entry name" value="ATP-DEPENDENT RNA HELICASE RHLE-RELATED"/>
    <property type="match status" value="1"/>
</dbReference>
<dbReference type="PANTHER" id="PTHR47959:SF8">
    <property type="entry name" value="RNA HELICASE"/>
    <property type="match status" value="1"/>
</dbReference>
<dbReference type="Pfam" id="PF08147">
    <property type="entry name" value="DBP10CT"/>
    <property type="match status" value="1"/>
</dbReference>
<dbReference type="Pfam" id="PF00270">
    <property type="entry name" value="DEAD"/>
    <property type="match status" value="1"/>
</dbReference>
<dbReference type="Pfam" id="PF00271">
    <property type="entry name" value="Helicase_C"/>
    <property type="match status" value="1"/>
</dbReference>
<dbReference type="SMART" id="SM01123">
    <property type="entry name" value="DBP10CT"/>
    <property type="match status" value="1"/>
</dbReference>
<dbReference type="SMART" id="SM00487">
    <property type="entry name" value="DEXDc"/>
    <property type="match status" value="1"/>
</dbReference>
<dbReference type="SMART" id="SM00490">
    <property type="entry name" value="HELICc"/>
    <property type="match status" value="1"/>
</dbReference>
<dbReference type="SUPFAM" id="SSF52540">
    <property type="entry name" value="P-loop containing nucleoside triphosphate hydrolases"/>
    <property type="match status" value="2"/>
</dbReference>
<dbReference type="PROSITE" id="PS00039">
    <property type="entry name" value="DEAD_ATP_HELICASE"/>
    <property type="match status" value="1"/>
</dbReference>
<dbReference type="PROSITE" id="PS51192">
    <property type="entry name" value="HELICASE_ATP_BIND_1"/>
    <property type="match status" value="1"/>
</dbReference>
<dbReference type="PROSITE" id="PS51194">
    <property type="entry name" value="HELICASE_CTER"/>
    <property type="match status" value="1"/>
</dbReference>
<dbReference type="PROSITE" id="PS51195">
    <property type="entry name" value="Q_MOTIF"/>
    <property type="match status" value="1"/>
</dbReference>